<gene>
    <name evidence="1" type="primary">nadX2</name>
    <name type="ordered locus">BP1922</name>
</gene>
<evidence type="ECO:0000255" key="1">
    <source>
        <dbReference type="HAMAP-Rule" id="MF_01265"/>
    </source>
</evidence>
<name>ASPD2_BORPE</name>
<reference key="1">
    <citation type="journal article" date="2003" name="Nat. Genet.">
        <title>Comparative analysis of the genome sequences of Bordetella pertussis, Bordetella parapertussis and Bordetella bronchiseptica.</title>
        <authorList>
            <person name="Parkhill J."/>
            <person name="Sebaihia M."/>
            <person name="Preston A."/>
            <person name="Murphy L.D."/>
            <person name="Thomson N.R."/>
            <person name="Harris D.E."/>
            <person name="Holden M.T.G."/>
            <person name="Churcher C.M."/>
            <person name="Bentley S.D."/>
            <person name="Mungall K.L."/>
            <person name="Cerdeno-Tarraga A.-M."/>
            <person name="Temple L."/>
            <person name="James K.D."/>
            <person name="Harris B."/>
            <person name="Quail M.A."/>
            <person name="Achtman M."/>
            <person name="Atkin R."/>
            <person name="Baker S."/>
            <person name="Basham D."/>
            <person name="Bason N."/>
            <person name="Cherevach I."/>
            <person name="Chillingworth T."/>
            <person name="Collins M."/>
            <person name="Cronin A."/>
            <person name="Davis P."/>
            <person name="Doggett J."/>
            <person name="Feltwell T."/>
            <person name="Goble A."/>
            <person name="Hamlin N."/>
            <person name="Hauser H."/>
            <person name="Holroyd S."/>
            <person name="Jagels K."/>
            <person name="Leather S."/>
            <person name="Moule S."/>
            <person name="Norberczak H."/>
            <person name="O'Neil S."/>
            <person name="Ormond D."/>
            <person name="Price C."/>
            <person name="Rabbinowitsch E."/>
            <person name="Rutter S."/>
            <person name="Sanders M."/>
            <person name="Saunders D."/>
            <person name="Seeger K."/>
            <person name="Sharp S."/>
            <person name="Simmonds M."/>
            <person name="Skelton J."/>
            <person name="Squares R."/>
            <person name="Squares S."/>
            <person name="Stevens K."/>
            <person name="Unwin L."/>
            <person name="Whitehead S."/>
            <person name="Barrell B.G."/>
            <person name="Maskell D.J."/>
        </authorList>
    </citation>
    <scope>NUCLEOTIDE SEQUENCE [LARGE SCALE GENOMIC DNA]</scope>
    <source>
        <strain>Tohama I / ATCC BAA-589 / NCTC 13251</strain>
    </source>
</reference>
<comment type="function">
    <text evidence="1">Specifically catalyzes the NAD or NADP-dependent dehydrogenation of L-aspartate to iminoaspartate.</text>
</comment>
<comment type="catalytic activity">
    <reaction evidence="1">
        <text>L-aspartate + NADP(+) + H2O = oxaloacetate + NH4(+) + NADPH + H(+)</text>
        <dbReference type="Rhea" id="RHEA:11784"/>
        <dbReference type="ChEBI" id="CHEBI:15377"/>
        <dbReference type="ChEBI" id="CHEBI:15378"/>
        <dbReference type="ChEBI" id="CHEBI:16452"/>
        <dbReference type="ChEBI" id="CHEBI:28938"/>
        <dbReference type="ChEBI" id="CHEBI:29991"/>
        <dbReference type="ChEBI" id="CHEBI:57783"/>
        <dbReference type="ChEBI" id="CHEBI:58349"/>
        <dbReference type="EC" id="1.4.1.21"/>
    </reaction>
</comment>
<comment type="catalytic activity">
    <reaction evidence="1">
        <text>L-aspartate + NAD(+) + H2O = oxaloacetate + NH4(+) + NADH + H(+)</text>
        <dbReference type="Rhea" id="RHEA:11788"/>
        <dbReference type="ChEBI" id="CHEBI:15377"/>
        <dbReference type="ChEBI" id="CHEBI:15378"/>
        <dbReference type="ChEBI" id="CHEBI:16452"/>
        <dbReference type="ChEBI" id="CHEBI:28938"/>
        <dbReference type="ChEBI" id="CHEBI:29991"/>
        <dbReference type="ChEBI" id="CHEBI:57540"/>
        <dbReference type="ChEBI" id="CHEBI:57945"/>
        <dbReference type="EC" id="1.4.1.21"/>
    </reaction>
</comment>
<comment type="pathway">
    <text evidence="1">Cofactor biosynthesis; NAD(+) biosynthesis; iminoaspartate from L-aspartate (dehydrogenase route): step 1/1.</text>
</comment>
<comment type="miscellaneous">
    <text evidence="1">The iminoaspartate product is unstable in aqueous solution and can decompose to oxaloacetate and ammonia.</text>
</comment>
<comment type="similarity">
    <text evidence="1">Belongs to the L-aspartate dehydrogenase family.</text>
</comment>
<proteinExistence type="inferred from homology"/>
<accession>Q7VX83</accession>
<feature type="chain" id="PRO_0000144886" description="L-aspartate dehydrogenase 2">
    <location>
        <begin position="1"/>
        <end position="267"/>
    </location>
</feature>
<feature type="active site" evidence="1">
    <location>
        <position position="219"/>
    </location>
</feature>
<feature type="binding site" evidence="1">
    <location>
        <position position="123"/>
    </location>
    <ligand>
        <name>NAD(+)</name>
        <dbReference type="ChEBI" id="CHEBI:57540"/>
    </ligand>
</feature>
<feature type="binding site" evidence="1">
    <location>
        <position position="189"/>
    </location>
    <ligand>
        <name>NAD(+)</name>
        <dbReference type="ChEBI" id="CHEBI:57540"/>
    </ligand>
</feature>
<organism>
    <name type="scientific">Bordetella pertussis (strain Tohama I / ATCC BAA-589 / NCTC 13251)</name>
    <dbReference type="NCBI Taxonomy" id="257313"/>
    <lineage>
        <taxon>Bacteria</taxon>
        <taxon>Pseudomonadati</taxon>
        <taxon>Pseudomonadota</taxon>
        <taxon>Betaproteobacteria</taxon>
        <taxon>Burkholderiales</taxon>
        <taxon>Alcaligenaceae</taxon>
        <taxon>Bordetella</taxon>
    </lineage>
</organism>
<keyword id="KW-0520">NAD</keyword>
<keyword id="KW-0521">NADP</keyword>
<keyword id="KW-0560">Oxidoreductase</keyword>
<keyword id="KW-0662">Pyridine nucleotide biosynthesis</keyword>
<keyword id="KW-1185">Reference proteome</keyword>
<protein>
    <recommendedName>
        <fullName evidence="1">L-aspartate dehydrogenase 2</fullName>
        <ecNumber evidence="1">1.4.1.21</ecNumber>
    </recommendedName>
</protein>
<dbReference type="EC" id="1.4.1.21" evidence="1"/>
<dbReference type="EMBL" id="BX640416">
    <property type="protein sequence ID" value="CAE42204.1"/>
    <property type="molecule type" value="Genomic_DNA"/>
</dbReference>
<dbReference type="RefSeq" id="NP_880608.1">
    <property type="nucleotide sequence ID" value="NC_002929.2"/>
</dbReference>
<dbReference type="RefSeq" id="WP_010930637.1">
    <property type="nucleotide sequence ID" value="NC_002929.2"/>
</dbReference>
<dbReference type="SMR" id="Q7VX83"/>
<dbReference type="STRING" id="257313.BP1922"/>
<dbReference type="PaxDb" id="257313-BP1922"/>
<dbReference type="KEGG" id="bpe:BP1922"/>
<dbReference type="PATRIC" id="fig|257313.5.peg.2064"/>
<dbReference type="eggNOG" id="COG1712">
    <property type="taxonomic scope" value="Bacteria"/>
</dbReference>
<dbReference type="HOGENOM" id="CLU_089550_0_0_4"/>
<dbReference type="UniPathway" id="UPA00253">
    <property type="reaction ID" value="UER00456"/>
</dbReference>
<dbReference type="Proteomes" id="UP000002676">
    <property type="component" value="Chromosome"/>
</dbReference>
<dbReference type="GO" id="GO:0033735">
    <property type="term" value="F:aspartate dehydrogenase activity"/>
    <property type="evidence" value="ECO:0007669"/>
    <property type="project" value="UniProtKB-EC"/>
</dbReference>
<dbReference type="GO" id="GO:0051287">
    <property type="term" value="F:NAD binding"/>
    <property type="evidence" value="ECO:0007669"/>
    <property type="project" value="UniProtKB-UniRule"/>
</dbReference>
<dbReference type="GO" id="GO:0050661">
    <property type="term" value="F:NADP binding"/>
    <property type="evidence" value="ECO:0007669"/>
    <property type="project" value="UniProtKB-UniRule"/>
</dbReference>
<dbReference type="GO" id="GO:0016639">
    <property type="term" value="F:oxidoreductase activity, acting on the CH-NH2 group of donors, NAD or NADP as acceptor"/>
    <property type="evidence" value="ECO:0007669"/>
    <property type="project" value="UniProtKB-UniRule"/>
</dbReference>
<dbReference type="GO" id="GO:0009435">
    <property type="term" value="P:NAD biosynthetic process"/>
    <property type="evidence" value="ECO:0007669"/>
    <property type="project" value="UniProtKB-UniRule"/>
</dbReference>
<dbReference type="Gene3D" id="3.30.360.10">
    <property type="entry name" value="Dihydrodipicolinate Reductase, domain 2"/>
    <property type="match status" value="1"/>
</dbReference>
<dbReference type="Gene3D" id="3.40.50.720">
    <property type="entry name" value="NAD(P)-binding Rossmann-like Domain"/>
    <property type="match status" value="1"/>
</dbReference>
<dbReference type="HAMAP" id="MF_01265">
    <property type="entry name" value="NadX"/>
    <property type="match status" value="1"/>
</dbReference>
<dbReference type="InterPro" id="IPR005106">
    <property type="entry name" value="Asp/hSer_DH_NAD-bd"/>
</dbReference>
<dbReference type="InterPro" id="IPR002811">
    <property type="entry name" value="Asp_DH"/>
</dbReference>
<dbReference type="InterPro" id="IPR020626">
    <property type="entry name" value="Asp_DH_prok"/>
</dbReference>
<dbReference type="InterPro" id="IPR011182">
    <property type="entry name" value="L-Asp_DH"/>
</dbReference>
<dbReference type="InterPro" id="IPR036291">
    <property type="entry name" value="NAD(P)-bd_dom_sf"/>
</dbReference>
<dbReference type="NCBIfam" id="NF009824">
    <property type="entry name" value="PRK13301.1"/>
    <property type="match status" value="1"/>
</dbReference>
<dbReference type="NCBIfam" id="NF009828">
    <property type="entry name" value="PRK13303.1-3"/>
    <property type="match status" value="1"/>
</dbReference>
<dbReference type="NCBIfam" id="NF009829">
    <property type="entry name" value="PRK13303.1-4"/>
    <property type="match status" value="1"/>
</dbReference>
<dbReference type="PANTHER" id="PTHR31873:SF6">
    <property type="entry name" value="ASPARTATE DEHYDROGENASE DOMAIN-CONTAINING PROTEIN"/>
    <property type="match status" value="1"/>
</dbReference>
<dbReference type="PANTHER" id="PTHR31873">
    <property type="entry name" value="L-ASPARTATE DEHYDROGENASE-RELATED"/>
    <property type="match status" value="1"/>
</dbReference>
<dbReference type="Pfam" id="PF01958">
    <property type="entry name" value="Asp_DH_C"/>
    <property type="match status" value="1"/>
</dbReference>
<dbReference type="Pfam" id="PF03447">
    <property type="entry name" value="NAD_binding_3"/>
    <property type="match status" value="1"/>
</dbReference>
<dbReference type="PIRSF" id="PIRSF005227">
    <property type="entry name" value="Asp_dh_NAD_syn"/>
    <property type="match status" value="1"/>
</dbReference>
<dbReference type="SUPFAM" id="SSF55347">
    <property type="entry name" value="Glyceraldehyde-3-phosphate dehydrogenase-like, C-terminal domain"/>
    <property type="match status" value="1"/>
</dbReference>
<dbReference type="SUPFAM" id="SSF51735">
    <property type="entry name" value="NAD(P)-binding Rossmann-fold domains"/>
    <property type="match status" value="1"/>
</dbReference>
<sequence>MTHRIAFIGLGAIASDVAAGLLADAAQPCQLAALTRNAADLPPALAGRVALLDGLPGLLAWRPDLVVEAAGQQAIAEHAEGCLTAGLDMIICSAGALADDALRARLIAAAEAGGARIRVPAGAIAGLDYLQAVAGRDDAEVVYESRKPVAAWRAELPGMGIDPDTLAESRTLFSGPAREAALRFPKNLNVAATLALAGIGMTRTRVEVVVDPQARGNQHRIQVRSPLGEMQIELVNAPSPANPKTSWLVAHSVLATIRRHLARFTIG</sequence>